<dbReference type="EMBL" id="CU329670">
    <property type="protein sequence ID" value="CAB11713.1"/>
    <property type="molecule type" value="Genomic_DNA"/>
</dbReference>
<dbReference type="PIR" id="T38814">
    <property type="entry name" value="T38814"/>
</dbReference>
<dbReference type="RefSeq" id="NP_594753.1">
    <property type="nucleotide sequence ID" value="NM_001020180.2"/>
</dbReference>
<dbReference type="SMR" id="O36022"/>
<dbReference type="BioGRID" id="279680">
    <property type="interactions" value="8"/>
</dbReference>
<dbReference type="FunCoup" id="O36022">
    <property type="interactions" value="28"/>
</dbReference>
<dbReference type="STRING" id="284812.O36022"/>
<dbReference type="CAZy" id="GT62">
    <property type="family name" value="Glycosyltransferase Family 62"/>
</dbReference>
<dbReference type="PaxDb" id="4896-SPAC4F10.10c.1"/>
<dbReference type="EnsemblFungi" id="SPAC4F10.10c.1">
    <property type="protein sequence ID" value="SPAC4F10.10c.1:pep"/>
    <property type="gene ID" value="SPAC4F10.10c"/>
</dbReference>
<dbReference type="GeneID" id="2543252"/>
<dbReference type="KEGG" id="spo:2543252"/>
<dbReference type="PomBase" id="SPAC4F10.10c">
    <property type="gene designation" value="mnn9"/>
</dbReference>
<dbReference type="VEuPathDB" id="FungiDB:SPAC4F10.10c"/>
<dbReference type="eggNOG" id="ENOG502QRPX">
    <property type="taxonomic scope" value="Eukaryota"/>
</dbReference>
<dbReference type="HOGENOM" id="CLU_017872_4_0_1"/>
<dbReference type="InParanoid" id="O36022"/>
<dbReference type="OMA" id="IPKTREG"/>
<dbReference type="PhylomeDB" id="O36022"/>
<dbReference type="UniPathway" id="UPA00378"/>
<dbReference type="PRO" id="PR:O36022"/>
<dbReference type="Proteomes" id="UP000002485">
    <property type="component" value="Chromosome I"/>
</dbReference>
<dbReference type="GO" id="GO:0005783">
    <property type="term" value="C:endoplasmic reticulum"/>
    <property type="evidence" value="ECO:0007005"/>
    <property type="project" value="PomBase"/>
</dbReference>
<dbReference type="GO" id="GO:0005789">
    <property type="term" value="C:endoplasmic reticulum membrane"/>
    <property type="evidence" value="ECO:0007669"/>
    <property type="project" value="UniProtKB-SubCell"/>
</dbReference>
<dbReference type="GO" id="GO:0005794">
    <property type="term" value="C:Golgi apparatus"/>
    <property type="evidence" value="ECO:0000314"/>
    <property type="project" value="PomBase"/>
</dbReference>
<dbReference type="GO" id="GO:0000136">
    <property type="term" value="C:mannan polymerase complex"/>
    <property type="evidence" value="ECO:0000318"/>
    <property type="project" value="GO_Central"/>
</dbReference>
<dbReference type="GO" id="GO:0140497">
    <property type="term" value="C:mannan polymerase II complex"/>
    <property type="evidence" value="ECO:0000353"/>
    <property type="project" value="PomBase"/>
</dbReference>
<dbReference type="GO" id="GO:0000030">
    <property type="term" value="F:mannosyltransferase activity"/>
    <property type="evidence" value="ECO:0000315"/>
    <property type="project" value="PomBase"/>
</dbReference>
<dbReference type="GO" id="GO:0000032">
    <property type="term" value="P:cell wall mannoprotein biosynthetic process"/>
    <property type="evidence" value="ECO:0000318"/>
    <property type="project" value="GO_Central"/>
</dbReference>
<dbReference type="GO" id="GO:0006487">
    <property type="term" value="P:protein N-linked glycosylation"/>
    <property type="evidence" value="ECO:0000318"/>
    <property type="project" value="GO_Central"/>
</dbReference>
<dbReference type="GO" id="GO:0018279">
    <property type="term" value="P:protein N-linked glycosylation via asparagine"/>
    <property type="evidence" value="ECO:0000315"/>
    <property type="project" value="PomBase"/>
</dbReference>
<dbReference type="FunFam" id="3.90.550.10:FF:000017">
    <property type="entry name" value="Mannan polymerase II complex ANP1 subunit"/>
    <property type="match status" value="1"/>
</dbReference>
<dbReference type="Gene3D" id="3.90.550.10">
    <property type="entry name" value="Spore Coat Polysaccharide Biosynthesis Protein SpsA, Chain A"/>
    <property type="match status" value="1"/>
</dbReference>
<dbReference type="InterPro" id="IPR052086">
    <property type="entry name" value="Mannan_Polymerase_Subunit"/>
</dbReference>
<dbReference type="InterPro" id="IPR029044">
    <property type="entry name" value="Nucleotide-diphossugar_trans"/>
</dbReference>
<dbReference type="PANTHER" id="PTHR43083:SF6">
    <property type="entry name" value="MANNAN POLYMERASE COMPLEXES SUBUNIT MNN9"/>
    <property type="match status" value="1"/>
</dbReference>
<dbReference type="PANTHER" id="PTHR43083">
    <property type="entry name" value="MANNAN POLYMERASE II"/>
    <property type="match status" value="1"/>
</dbReference>
<dbReference type="Pfam" id="PF03452">
    <property type="entry name" value="Anp1"/>
    <property type="match status" value="1"/>
</dbReference>
<dbReference type="SUPFAM" id="SSF53448">
    <property type="entry name" value="Nucleotide-diphospho-sugar transferases"/>
    <property type="match status" value="1"/>
</dbReference>
<organism>
    <name type="scientific">Schizosaccharomyces pombe (strain 972 / ATCC 24843)</name>
    <name type="common">Fission yeast</name>
    <dbReference type="NCBI Taxonomy" id="284812"/>
    <lineage>
        <taxon>Eukaryota</taxon>
        <taxon>Fungi</taxon>
        <taxon>Dikarya</taxon>
        <taxon>Ascomycota</taxon>
        <taxon>Taphrinomycotina</taxon>
        <taxon>Schizosaccharomycetes</taxon>
        <taxon>Schizosaccharomycetales</taxon>
        <taxon>Schizosaccharomycetaceae</taxon>
        <taxon>Schizosaccharomyces</taxon>
    </lineage>
</organism>
<proteinExistence type="inferred from homology"/>
<protein>
    <recommendedName>
        <fullName>Mannan polymerase complex subunit mnn9</fullName>
    </recommendedName>
</protein>
<accession>O36022</accession>
<comment type="function">
    <text evidence="1">Required for the addition of the long alpha 1,6-mannose backbone of N-linked glycans on cell wall and periplasmic proteins.</text>
</comment>
<comment type="pathway">
    <text evidence="2">Protein modification; protein glycosylation.</text>
</comment>
<comment type="subcellular location">
    <subcellularLocation>
        <location evidence="4">Endoplasmic reticulum membrane</location>
        <topology evidence="4">Single-pass type II membrane protein</topology>
    </subcellularLocation>
    <subcellularLocation>
        <location evidence="4">Golgi apparatus membrane</location>
        <topology evidence="4">Single-pass type II membrane protein</topology>
    </subcellularLocation>
    <text evidence="2 4">Cis-Golgi. Recycles between endoplasmic reticulum and Golgi.</text>
</comment>
<comment type="similarity">
    <text evidence="3">Belongs to the ANP1/MMN9/VAN1 family.</text>
</comment>
<keyword id="KW-0256">Endoplasmic reticulum</keyword>
<keyword id="KW-0333">Golgi apparatus</keyword>
<keyword id="KW-0472">Membrane</keyword>
<keyword id="KW-1185">Reference proteome</keyword>
<keyword id="KW-0735">Signal-anchor</keyword>
<keyword id="KW-0812">Transmembrane</keyword>
<keyword id="KW-1133">Transmembrane helix</keyword>
<reference evidence="6" key="1">
    <citation type="journal article" date="2002" name="Nature">
        <title>The genome sequence of Schizosaccharomyces pombe.</title>
        <authorList>
            <person name="Wood V."/>
            <person name="Gwilliam R."/>
            <person name="Rajandream M.A."/>
            <person name="Lyne M.H."/>
            <person name="Lyne R."/>
            <person name="Stewart A."/>
            <person name="Sgouros J.G."/>
            <person name="Peat N."/>
            <person name="Hayles J."/>
            <person name="Baker S.G."/>
            <person name="Basham D."/>
            <person name="Bowman S."/>
            <person name="Brooks K."/>
            <person name="Brown D."/>
            <person name="Brown S."/>
            <person name="Chillingworth T."/>
            <person name="Churcher C.M."/>
            <person name="Collins M."/>
            <person name="Connor R."/>
            <person name="Cronin A."/>
            <person name="Davis P."/>
            <person name="Feltwell T."/>
            <person name="Fraser A."/>
            <person name="Gentles S."/>
            <person name="Goble A."/>
            <person name="Hamlin N."/>
            <person name="Harris D.E."/>
            <person name="Hidalgo J."/>
            <person name="Hodgson G."/>
            <person name="Holroyd S."/>
            <person name="Hornsby T."/>
            <person name="Howarth S."/>
            <person name="Huckle E.J."/>
            <person name="Hunt S."/>
            <person name="Jagels K."/>
            <person name="James K.D."/>
            <person name="Jones L."/>
            <person name="Jones M."/>
            <person name="Leather S."/>
            <person name="McDonald S."/>
            <person name="McLean J."/>
            <person name="Mooney P."/>
            <person name="Moule S."/>
            <person name="Mungall K.L."/>
            <person name="Murphy L.D."/>
            <person name="Niblett D."/>
            <person name="Odell C."/>
            <person name="Oliver K."/>
            <person name="O'Neil S."/>
            <person name="Pearson D."/>
            <person name="Quail M.A."/>
            <person name="Rabbinowitsch E."/>
            <person name="Rutherford K.M."/>
            <person name="Rutter S."/>
            <person name="Saunders D."/>
            <person name="Seeger K."/>
            <person name="Sharp S."/>
            <person name="Skelton J."/>
            <person name="Simmonds M.N."/>
            <person name="Squares R."/>
            <person name="Squares S."/>
            <person name="Stevens K."/>
            <person name="Taylor K."/>
            <person name="Taylor R.G."/>
            <person name="Tivey A."/>
            <person name="Walsh S.V."/>
            <person name="Warren T."/>
            <person name="Whitehead S."/>
            <person name="Woodward J.R."/>
            <person name="Volckaert G."/>
            <person name="Aert R."/>
            <person name="Robben J."/>
            <person name="Grymonprez B."/>
            <person name="Weltjens I."/>
            <person name="Vanstreels E."/>
            <person name="Rieger M."/>
            <person name="Schaefer M."/>
            <person name="Mueller-Auer S."/>
            <person name="Gabel C."/>
            <person name="Fuchs M."/>
            <person name="Duesterhoeft A."/>
            <person name="Fritzc C."/>
            <person name="Holzer E."/>
            <person name="Moestl D."/>
            <person name="Hilbert H."/>
            <person name="Borzym K."/>
            <person name="Langer I."/>
            <person name="Beck A."/>
            <person name="Lehrach H."/>
            <person name="Reinhardt R."/>
            <person name="Pohl T.M."/>
            <person name="Eger P."/>
            <person name="Zimmermann W."/>
            <person name="Wedler H."/>
            <person name="Wambutt R."/>
            <person name="Purnelle B."/>
            <person name="Goffeau A."/>
            <person name="Cadieu E."/>
            <person name="Dreano S."/>
            <person name="Gloux S."/>
            <person name="Lelaure V."/>
            <person name="Mottier S."/>
            <person name="Galibert F."/>
            <person name="Aves S.J."/>
            <person name="Xiang Z."/>
            <person name="Hunt C."/>
            <person name="Moore K."/>
            <person name="Hurst S.M."/>
            <person name="Lucas M."/>
            <person name="Rochet M."/>
            <person name="Gaillardin C."/>
            <person name="Tallada V.A."/>
            <person name="Garzon A."/>
            <person name="Thode G."/>
            <person name="Daga R.R."/>
            <person name="Cruzado L."/>
            <person name="Jimenez J."/>
            <person name="Sanchez M."/>
            <person name="del Rey F."/>
            <person name="Benito J."/>
            <person name="Dominguez A."/>
            <person name="Revuelta J.L."/>
            <person name="Moreno S."/>
            <person name="Armstrong J."/>
            <person name="Forsburg S.L."/>
            <person name="Cerutti L."/>
            <person name="Lowe T."/>
            <person name="McCombie W.R."/>
            <person name="Paulsen I."/>
            <person name="Potashkin J."/>
            <person name="Shpakovski G.V."/>
            <person name="Ussery D."/>
            <person name="Barrell B.G."/>
            <person name="Nurse P."/>
        </authorList>
    </citation>
    <scope>NUCLEOTIDE SEQUENCE [LARGE SCALE GENOMIC DNA]</scope>
    <source>
        <strain>972 / ATCC 24843</strain>
    </source>
</reference>
<reference evidence="5" key="2">
    <citation type="journal article" date="2006" name="Nat. Biotechnol.">
        <title>ORFeome cloning and global analysis of protein localization in the fission yeast Schizosaccharomyces pombe.</title>
        <authorList>
            <person name="Matsuyama A."/>
            <person name="Arai R."/>
            <person name="Yashiroda Y."/>
            <person name="Shirai A."/>
            <person name="Kamata A."/>
            <person name="Sekido S."/>
            <person name="Kobayashi Y."/>
            <person name="Hashimoto A."/>
            <person name="Hamamoto M."/>
            <person name="Hiraoka Y."/>
            <person name="Horinouchi S."/>
            <person name="Yoshida M."/>
        </authorList>
    </citation>
    <scope>SUBCELLULAR LOCATION [LARGE SCALE ANALYSIS]</scope>
</reference>
<name>MNN9_SCHPO</name>
<evidence type="ECO:0000250" key="1"/>
<evidence type="ECO:0000250" key="2">
    <source>
        <dbReference type="UniProtKB" id="P39107"/>
    </source>
</evidence>
<evidence type="ECO:0000255" key="3"/>
<evidence type="ECO:0000269" key="4">
    <source>
    </source>
</evidence>
<evidence type="ECO:0000305" key="5"/>
<evidence type="ECO:0000312" key="6">
    <source>
        <dbReference type="EMBL" id="CAB11713.1"/>
    </source>
</evidence>
<sequence>MRVYNKSRIVGQLLFVALGITFIYYLFTPSVNSNAKVQIENRGGNSYEIYDMNKITESSDPIRNKEEVLILTPIARFYPQYWKNLLELDYPRNLISLGFIVPSSKDGAKVHRELRNAINAVQKGPGDKRFADVKILIQDSDLSSGQSEAERHKFSAQKERRGKLAATRNTLLLSTLKPSTSWVLWLDSDIVETPSTLIQDLAEHNEDVLVANCFQKQGDKLTPYDFNSWVDSQTAQELASHMDRDEILLEGYAELPTYRMLMAKIYEEHKDPSTIMALDGVGTTALLVKASVHRDGALFPTFPFYHLIESEGFAKMAKRLGHGVYGLPYYLVFHHNE</sequence>
<feature type="chain" id="PRO_0000316855" description="Mannan polymerase complex subunit mnn9">
    <location>
        <begin position="1"/>
        <end position="337"/>
    </location>
</feature>
<feature type="topological domain" description="Cytoplasmic" evidence="2 3">
    <location>
        <begin position="1"/>
        <end position="8"/>
    </location>
</feature>
<feature type="transmembrane region" description="Helical; Signal-anchor for type II membrane protein" evidence="3">
    <location>
        <begin position="9"/>
        <end position="29"/>
    </location>
</feature>
<feature type="topological domain" description="Lumenal" evidence="2 3">
    <location>
        <begin position="30"/>
        <end position="337"/>
    </location>
</feature>
<gene>
    <name evidence="2" type="primary">mnn9</name>
    <name type="ORF">SPAC4F10.10c</name>
</gene>